<keyword id="KW-1003">Cell membrane</keyword>
<keyword id="KW-0256">Endoplasmic reticulum</keyword>
<keyword id="KW-0325">Glycoprotein</keyword>
<keyword id="KW-0472">Membrane</keyword>
<keyword id="KW-0496">Mitochondrion</keyword>
<keyword id="KW-0999">Mitochondrion inner membrane</keyword>
<keyword id="KW-0558">Oxidation</keyword>
<keyword id="KW-1185">Reference proteome</keyword>
<keyword id="KW-0677">Repeat</keyword>
<keyword id="KW-0812">Transmembrane</keyword>
<keyword id="KW-1133">Transmembrane helix</keyword>
<keyword id="KW-0813">Transport</keyword>
<organism>
    <name type="scientific">Rattus norvegicus</name>
    <name type="common">Rat</name>
    <dbReference type="NCBI Taxonomy" id="10116"/>
    <lineage>
        <taxon>Eukaryota</taxon>
        <taxon>Metazoa</taxon>
        <taxon>Chordata</taxon>
        <taxon>Craniata</taxon>
        <taxon>Vertebrata</taxon>
        <taxon>Euteleostomi</taxon>
        <taxon>Mammalia</taxon>
        <taxon>Eutheria</taxon>
        <taxon>Euarchontoglires</taxon>
        <taxon>Glires</taxon>
        <taxon>Rodentia</taxon>
        <taxon>Myomorpha</taxon>
        <taxon>Muroidea</taxon>
        <taxon>Muridae</taxon>
        <taxon>Murinae</taxon>
        <taxon>Rattus</taxon>
    </lineage>
</organism>
<comment type="function">
    <text evidence="1 2 8 9 10 11 12 14 15 16 17 18 19 20 21 22">Channel that allows the facilitated permeation of water and uncharged molecules, such as hydrogen peroxide and the neutral form of ammonia (NH3), through cellular membranes such as plasma membrane, inner mitochondrial membrane and endoplasmic reticulum membrane of several tissues (PubMed:12774023, PubMed:15749715, PubMed:15948717, PubMed:15988592, PubMed:16177191, PubMed:16624991, PubMed:17189259, PubMed:18059526, PubMed:20132793, PubMed:23299935, PubMed:31372390, PubMed:33892285, PubMed:9299432, PubMed:9374520). The transport of ammonia neutral form induces a parallel transport of proton, at alkaline pH when the concentration of ammonia is high (PubMed:15988592). However, it is unclear whether the transport of proton takes place via the aquaporin or via an endogenous pathway (PubMed:15988592). Also, may transport ammonia analogs such as formamide and methylamine, a transport favourited at basic pH due to the increase of unprotonated (neutral) form, which is expected to favor diffusion (PubMed:15749715, PubMed:15948717, PubMed:15988592). Does not transport urea or glycerol (PubMed:15948717). The water transport mechanism is mercury- and copper-sensitive and passive in response to osmotic driving forces (PubMed:18059526, PubMed:20132793, PubMed:9299432, PubMed:9374520). At the canicular plasma membrane, mediates the osmotic transport of water toward the bile canaliculus and facilitates the cAMP-induced bile canalicular water secretion, a process involved in bile formation (By similarity). In addition, mediates the hydrogen peroxide release from hepatocyte mitochondria that modulates the SREBF2-mediated cholesterol synthesis and facilitates the mitochondrial ammonia uptake which is metabolized into urea, mainly under glucagon stimulation (PubMed:20132793, PubMed:23299935, PubMed:31372390). In B cells, transports the CYBB-generated hydrogen peroxide from the external leaflet of the plasma membrane to the cytosol to promote B cell activation and differentiation for signal amplification (By similarity). In the small intestine and colon system, mediates water transport through mitochondria and apical membrane of epithelial cells (PubMed:15749715, PubMed:16177191, PubMed:18059526). May play an important role in the adaptive response of proximal tubule cells to acidosis possibly facilitating mitochondrial ammonia transport (By similarity).</text>
</comment>
<comment type="catalytic activity">
    <reaction evidence="8 9 10 12 14 15 16 17 19 20 21 22">
        <text>H2O(in) = H2O(out)</text>
        <dbReference type="Rhea" id="RHEA:29667"/>
        <dbReference type="ChEBI" id="CHEBI:15377"/>
    </reaction>
</comment>
<comment type="catalytic activity">
    <reaction evidence="11 14 15">
        <text>NH4(+)(in) = NH4(+)(out)</text>
        <dbReference type="Rhea" id="RHEA:28747"/>
        <dbReference type="ChEBI" id="CHEBI:28938"/>
    </reaction>
</comment>
<comment type="catalytic activity">
    <reaction evidence="19 20">
        <text>H2O2(out) = H2O2(in)</text>
        <dbReference type="Rhea" id="RHEA:74375"/>
        <dbReference type="ChEBI" id="CHEBI:16240"/>
    </reaction>
</comment>
<comment type="catalytic activity">
    <reaction evidence="10 11 17">
        <text>formamide(out) = formamide(in)</text>
        <dbReference type="Rhea" id="RHEA:74387"/>
        <dbReference type="ChEBI" id="CHEBI:16397"/>
    </reaction>
</comment>
<comment type="catalytic activity">
    <reaction evidence="11 18">
        <text>methylamine(out) = methylamine(in)</text>
        <dbReference type="Rhea" id="RHEA:74391"/>
        <dbReference type="ChEBI" id="CHEBI:59338"/>
    </reaction>
</comment>
<comment type="activity regulation">
    <text evidence="1">Reversibly gated by a two-step sulfenylation-persulfidation process in cells undergoing diverse stresses.</text>
</comment>
<comment type="subcellular location">
    <subcellularLocation>
        <location evidence="4 5 6 9 20">Cell membrane</location>
        <topology evidence="3">Multi-pass membrane protein</topology>
    </subcellularLocation>
    <subcellularLocation>
        <location evidence="9 18 26">Mitochondrion inner membrane</location>
        <topology evidence="3">Multi-pass membrane protein</topology>
    </subcellularLocation>
    <subcellularLocation>
        <location evidence="7 12 16">Apical cell membrane</location>
        <topology evidence="3">Multi-pass membrane protein</topology>
    </subcellularLocation>
    <subcellularLocation>
        <location evidence="4">Basolateral cell membrane</location>
        <topology evidence="3">Multi-pass membrane protein</topology>
    </subcellularLocation>
    <subcellularLocation>
        <location evidence="2">Smooth endoplasmic reticulum membrane</location>
        <topology evidence="3">Multi-pass membrane protein</topology>
    </subcellularLocation>
    <text evidence="2 5 7 8 12 16">Localized at the hepatocyte canalicular plasma membrane (PubMed:11436986, PubMed:12774023). Localized at the apical membrane of the gall-bladder epithelial cells lining both the neck and corpus regions (By similarity). Localized on the apical membranes of pancreatic acinar cells and mucosal epithelium of the colon and jejunum (PubMed:11436986, PubMed:16177191). Trafficking from intracellular vesicles to the hepatocyte canalicular plasma membrane is induced by glucagon or the second messenger 3',5'-cyclic AMP and the translocation is protein kinase A and microtubule-dependent (PubMed:11278499, PubMed:12774023). Localized at the brush border membranes of epithelial cells from jejunum (PubMed:18059526). Localized at the luminal membranes of crypts in ascending colon (By similarity).</text>
</comment>
<comment type="tissue specificity">
    <text evidence="6 13 16 20 21 22">Highly expressed in sperm, pancreas and liver (PubMed:9299432, PubMed:9374520). Expressed in hepatocytes, acinal cells of pancreas and salivary gland, and absorptive colonic epithelial cells (PubMed:9374520). Expressed in the myoepithelium of submandibular and parotid glands (PubMed:16311720). Expressed in pancreatic beta-cells (PubMed:33892285). Expressed in testis but not in epididymis (PubMed:11369592). Expressed in small intestine (PubMed:18059526).</text>
</comment>
<comment type="induction">
    <text evidence="18">Up-regulated by glucagon.</text>
</comment>
<comment type="domain">
    <text>Aquaporins contain two tandem repeats each containing three membrane-spanning domains and a pore-forming loop with the signature motif Asn-Pro-Ala (NPA).</text>
</comment>
<comment type="PTM">
    <text evidence="5 6 7">N-glycosylated.</text>
</comment>
<comment type="PTM">
    <text evidence="1">Sulfenylation at Cys-55(C55-SOH) when hydrogen peroxide flows through the AQP8 channel, making it susceptible to hydrogen sulfide produced by CBS.</text>
</comment>
<comment type="PTM">
    <text evidence="1">Persulfidation at Cys-55 is required to gate AQP8 channel; under stress condition, hydrogen peroxide accumulates in the cell leading to CBS activation that produces hydrogen sulfide inducing persulfidation of oxidized Cys-55 (C55-SOH).</text>
</comment>
<comment type="similarity">
    <text evidence="25">Belongs to the MIP/aquaporin (TC 1.A.8) family.</text>
</comment>
<name>AQP8_RAT</name>
<dbReference type="EMBL" id="AB005547">
    <property type="protein sequence ID" value="BAA21918.1"/>
    <property type="molecule type" value="mRNA"/>
</dbReference>
<dbReference type="EMBL" id="AF007775">
    <property type="protein sequence ID" value="AAC53463.1"/>
    <property type="molecule type" value="mRNA"/>
</dbReference>
<dbReference type="EMBL" id="BC081812">
    <property type="protein sequence ID" value="AAH81812.1"/>
    <property type="molecule type" value="mRNA"/>
</dbReference>
<dbReference type="PIR" id="JC5622">
    <property type="entry name" value="JC5622"/>
</dbReference>
<dbReference type="RefSeq" id="NP_062031.1">
    <property type="nucleotide sequence ID" value="NM_019158.2"/>
</dbReference>
<dbReference type="SMR" id="P56405"/>
<dbReference type="FunCoup" id="P56405">
    <property type="interactions" value="4"/>
</dbReference>
<dbReference type="STRING" id="10116.ENSRNOP00000019939"/>
<dbReference type="GlyCosmos" id="P56405">
    <property type="glycosylation" value="1 site, No reported glycans"/>
</dbReference>
<dbReference type="GlyGen" id="P56405">
    <property type="glycosylation" value="1 site"/>
</dbReference>
<dbReference type="PhosphoSitePlus" id="P56405"/>
<dbReference type="PaxDb" id="10116-ENSRNOP00000019939"/>
<dbReference type="GeneID" id="29172"/>
<dbReference type="KEGG" id="rno:29172"/>
<dbReference type="UCSC" id="RGD:2146">
    <property type="organism name" value="rat"/>
</dbReference>
<dbReference type="AGR" id="RGD:2146"/>
<dbReference type="CTD" id="343"/>
<dbReference type="RGD" id="2146">
    <property type="gene designation" value="Aqp8"/>
</dbReference>
<dbReference type="eggNOG" id="KOG0223">
    <property type="taxonomic scope" value="Eukaryota"/>
</dbReference>
<dbReference type="HOGENOM" id="CLU_020019_3_5_1"/>
<dbReference type="InParanoid" id="P56405"/>
<dbReference type="OrthoDB" id="79631at9989"/>
<dbReference type="PhylomeDB" id="P56405"/>
<dbReference type="TreeFam" id="TF312940"/>
<dbReference type="Reactome" id="R-RNO-432047">
    <property type="pathway name" value="Passive transport by Aquaporins"/>
</dbReference>
<dbReference type="PRO" id="PR:P56405"/>
<dbReference type="Proteomes" id="UP000002494">
    <property type="component" value="Unplaced"/>
</dbReference>
<dbReference type="GO" id="GO:0045177">
    <property type="term" value="C:apical part of cell"/>
    <property type="evidence" value="ECO:0000266"/>
    <property type="project" value="RGD"/>
</dbReference>
<dbReference type="GO" id="GO:0016324">
    <property type="term" value="C:apical plasma membrane"/>
    <property type="evidence" value="ECO:0000314"/>
    <property type="project" value="UniProtKB"/>
</dbReference>
<dbReference type="GO" id="GO:0016323">
    <property type="term" value="C:basolateral plasma membrane"/>
    <property type="evidence" value="ECO:0000314"/>
    <property type="project" value="UniProtKB"/>
</dbReference>
<dbReference type="GO" id="GO:0031526">
    <property type="term" value="C:brush border membrane"/>
    <property type="evidence" value="ECO:0000314"/>
    <property type="project" value="UniProtKB"/>
</dbReference>
<dbReference type="GO" id="GO:0046691">
    <property type="term" value="C:intracellular canaliculus"/>
    <property type="evidence" value="ECO:0000314"/>
    <property type="project" value="UniProtKB"/>
</dbReference>
<dbReference type="GO" id="GO:0097708">
    <property type="term" value="C:intracellular vesicle"/>
    <property type="evidence" value="ECO:0000250"/>
    <property type="project" value="UniProtKB"/>
</dbReference>
<dbReference type="GO" id="GO:0005743">
    <property type="term" value="C:mitochondrial inner membrane"/>
    <property type="evidence" value="ECO:0000314"/>
    <property type="project" value="UniProtKB"/>
</dbReference>
<dbReference type="GO" id="GO:0031966">
    <property type="term" value="C:mitochondrial membrane"/>
    <property type="evidence" value="ECO:0000314"/>
    <property type="project" value="UniProtKB"/>
</dbReference>
<dbReference type="GO" id="GO:0005739">
    <property type="term" value="C:mitochondrion"/>
    <property type="evidence" value="ECO:0000250"/>
    <property type="project" value="UniProtKB"/>
</dbReference>
<dbReference type="GO" id="GO:0005886">
    <property type="term" value="C:plasma membrane"/>
    <property type="evidence" value="ECO:0000314"/>
    <property type="project" value="UniProtKB"/>
</dbReference>
<dbReference type="GO" id="GO:0005790">
    <property type="term" value="C:smooth endoplasmic reticulum"/>
    <property type="evidence" value="ECO:0000250"/>
    <property type="project" value="UniProtKB"/>
</dbReference>
<dbReference type="GO" id="GO:0030868">
    <property type="term" value="C:smooth endoplasmic reticulum membrane"/>
    <property type="evidence" value="ECO:0007669"/>
    <property type="project" value="UniProtKB-SubCell"/>
</dbReference>
<dbReference type="GO" id="GO:0008519">
    <property type="term" value="F:ammonium channel activity"/>
    <property type="evidence" value="ECO:0000314"/>
    <property type="project" value="UniProtKB"/>
</dbReference>
<dbReference type="GO" id="GO:0015264">
    <property type="term" value="F:methylammonium channel activity"/>
    <property type="evidence" value="ECO:0000314"/>
    <property type="project" value="UniProtKB"/>
</dbReference>
<dbReference type="GO" id="GO:0015265">
    <property type="term" value="F:urea channel activity"/>
    <property type="evidence" value="ECO:0000250"/>
    <property type="project" value="UniProtKB"/>
</dbReference>
<dbReference type="GO" id="GO:0015250">
    <property type="term" value="F:water channel activity"/>
    <property type="evidence" value="ECO:0000314"/>
    <property type="project" value="UniProtKB"/>
</dbReference>
<dbReference type="GO" id="GO:0140157">
    <property type="term" value="P:ammonium import across plasma membrane"/>
    <property type="evidence" value="ECO:0000314"/>
    <property type="project" value="UniProtKB"/>
</dbReference>
<dbReference type="GO" id="GO:0072488">
    <property type="term" value="P:ammonium transmembrane transport"/>
    <property type="evidence" value="ECO:0000314"/>
    <property type="project" value="UniProtKB"/>
</dbReference>
<dbReference type="GO" id="GO:0030183">
    <property type="term" value="P:B cell differentiation"/>
    <property type="evidence" value="ECO:0000250"/>
    <property type="project" value="UniProtKB"/>
</dbReference>
<dbReference type="GO" id="GO:0015722">
    <property type="term" value="P:canalicular bile acid transport"/>
    <property type="evidence" value="ECO:0000314"/>
    <property type="project" value="RGD"/>
</dbReference>
<dbReference type="GO" id="GO:1990748">
    <property type="term" value="P:cellular detoxification"/>
    <property type="evidence" value="ECO:0000250"/>
    <property type="project" value="UniProtKB"/>
</dbReference>
<dbReference type="GO" id="GO:0071320">
    <property type="term" value="P:cellular response to cAMP"/>
    <property type="evidence" value="ECO:0000266"/>
    <property type="project" value="RGD"/>
</dbReference>
<dbReference type="GO" id="GO:0080170">
    <property type="term" value="P:hydrogen peroxide transmembrane transport"/>
    <property type="evidence" value="ECO:0000315"/>
    <property type="project" value="UniProtKB"/>
</dbReference>
<dbReference type="GO" id="GO:0072489">
    <property type="term" value="P:methylammonium transmembrane transport"/>
    <property type="evidence" value="ECO:0000315"/>
    <property type="project" value="UniProtKB"/>
</dbReference>
<dbReference type="GO" id="GO:0015843">
    <property type="term" value="P:methylammonium transport"/>
    <property type="evidence" value="ECO:0000314"/>
    <property type="project" value="UniProtKB"/>
</dbReference>
<dbReference type="GO" id="GO:0045540">
    <property type="term" value="P:regulation of cholesterol biosynthetic process"/>
    <property type="evidence" value="ECO:0000250"/>
    <property type="project" value="UniProtKB"/>
</dbReference>
<dbReference type="GO" id="GO:0035377">
    <property type="term" value="P:transepithelial water transport"/>
    <property type="evidence" value="ECO:0000314"/>
    <property type="project" value="UniProtKB"/>
</dbReference>
<dbReference type="GO" id="GO:0015840">
    <property type="term" value="P:urea transport"/>
    <property type="evidence" value="ECO:0000250"/>
    <property type="project" value="UniProtKB"/>
</dbReference>
<dbReference type="GO" id="GO:0006833">
    <property type="term" value="P:water transport"/>
    <property type="evidence" value="ECO:0000314"/>
    <property type="project" value="UniProtKB"/>
</dbReference>
<dbReference type="FunFam" id="1.20.1080.10:FF:000015">
    <property type="entry name" value="Aquaporin 8"/>
    <property type="match status" value="1"/>
</dbReference>
<dbReference type="Gene3D" id="1.20.1080.10">
    <property type="entry name" value="Glycerol uptake facilitator protein"/>
    <property type="match status" value="1"/>
</dbReference>
<dbReference type="InterPro" id="IPR023271">
    <property type="entry name" value="Aquaporin-like"/>
</dbReference>
<dbReference type="InterPro" id="IPR023277">
    <property type="entry name" value="Aquaporin_8"/>
</dbReference>
<dbReference type="InterPro" id="IPR034294">
    <property type="entry name" value="Aquaporin_transptr"/>
</dbReference>
<dbReference type="InterPro" id="IPR000425">
    <property type="entry name" value="MIP"/>
</dbReference>
<dbReference type="InterPro" id="IPR022357">
    <property type="entry name" value="MIP_CS"/>
</dbReference>
<dbReference type="PANTHER" id="PTHR45665">
    <property type="entry name" value="AQUAPORIN-8"/>
    <property type="match status" value="1"/>
</dbReference>
<dbReference type="PANTHER" id="PTHR45665:SF9">
    <property type="entry name" value="AQUAPORIN-8"/>
    <property type="match status" value="1"/>
</dbReference>
<dbReference type="Pfam" id="PF00230">
    <property type="entry name" value="MIP"/>
    <property type="match status" value="1"/>
</dbReference>
<dbReference type="PRINTS" id="PR02020">
    <property type="entry name" value="AQUAPORIN8"/>
</dbReference>
<dbReference type="PRINTS" id="PR00783">
    <property type="entry name" value="MINTRINSICP"/>
</dbReference>
<dbReference type="SUPFAM" id="SSF81338">
    <property type="entry name" value="Aquaporin-like"/>
    <property type="match status" value="1"/>
</dbReference>
<dbReference type="PROSITE" id="PS00221">
    <property type="entry name" value="MIP"/>
    <property type="match status" value="1"/>
</dbReference>
<reference key="1">
    <citation type="journal article" date="1997" name="Biochem. Biophys. Res. Commun.">
        <title>Cloning and functional expression of a second new aquaporin abundantly expressed in testis.</title>
        <authorList>
            <person name="Ishibashi K."/>
            <person name="Kuwahara M."/>
            <person name="Kageyama Y."/>
            <person name="Tohsaka A."/>
            <person name="Marumo F."/>
            <person name="Sasaki S."/>
        </authorList>
    </citation>
    <scope>NUCLEOTIDE SEQUENCE [MRNA]</scope>
    <scope>FUNCTION</scope>
    <scope>TRANSPORTER ACTIVITY</scope>
    <scope>TISSUE SPECIFICITY</scope>
    <source>
        <strain>Sprague-Dawley</strain>
        <tissue>Testis</tissue>
    </source>
</reference>
<reference key="2">
    <citation type="journal article" date="1997" name="J. Biol. Chem.">
        <title>Molecular cloning of a new aquaporin from rat pancreas and liver.</title>
        <authorList>
            <person name="Koyama Y."/>
            <person name="Yamamoto T."/>
            <person name="Kondo D."/>
            <person name="Funaki H."/>
            <person name="Yaoita E."/>
            <person name="Kawasaki K."/>
            <person name="Sato N."/>
            <person name="Hatakeyama K."/>
            <person name="Kihara I."/>
        </authorList>
    </citation>
    <scope>NUCLEOTIDE SEQUENCE [MRNA]</scope>
    <scope>FUNCTION</scope>
    <scope>TRANSPORTER ACTIVITY</scope>
    <scope>TISSUE SPECIFICITY</scope>
    <source>
        <strain>Sprague-Dawley</strain>
        <tissue>Liver</tissue>
        <tissue>Pancreas</tissue>
    </source>
</reference>
<reference key="3">
    <citation type="journal article" date="2004" name="Genome Res.">
        <title>The status, quality, and expansion of the NIH full-length cDNA project: the Mammalian Gene Collection (MGC).</title>
        <authorList>
            <consortium name="The MGC Project Team"/>
        </authorList>
    </citation>
    <scope>NUCLEOTIDE SEQUENCE [LARGE SCALE MRNA]</scope>
    <source>
        <tissue>Testis</tissue>
    </source>
</reference>
<reference key="4">
    <citation type="journal article" date="2000" name="Pflugers Arch.">
        <title>Evidence that aquaporin-8 is located in the basolateral membrane of rat submandibular gland acinar cells.</title>
        <authorList>
            <person name="Wellner R.B."/>
            <person name="Hoque A.T."/>
            <person name="Goldsmith C.M."/>
            <person name="Baum B.J."/>
        </authorList>
    </citation>
    <scope>SUBCELLULAR LOCATION</scope>
</reference>
<reference key="5">
    <citation type="journal article" date="2001" name="Arch. Histol. Cytol.">
        <title>Immunolocalization of aquaporin-8 in rat digestive organs and testis.</title>
        <authorList>
            <person name="Tani T."/>
            <person name="Koyama Y."/>
            <person name="Nihei K."/>
            <person name="Hatakeyama S."/>
            <person name="Ohshiro K."/>
            <person name="Yoshida Y."/>
            <person name="Yaoita E."/>
            <person name="Sakai Y."/>
            <person name="Hatakeyama K."/>
            <person name="Yamamoto T."/>
        </authorList>
    </citation>
    <scope>SUBCELLULAR LOCATION</scope>
    <scope>GLYCOSYLATION</scope>
</reference>
<reference key="6">
    <citation type="journal article" date="2001" name="Biol. Reprod.">
        <title>Expression and localization of the aquaporin-8 water channel in rat testis.</title>
        <authorList>
            <person name="Calamita G."/>
            <person name="Mazzone A."/>
            <person name="Cho Y.S."/>
            <person name="Valenti G."/>
            <person name="Svelto M."/>
        </authorList>
    </citation>
    <scope>SUBCELLULAR LOCATION</scope>
    <scope>TISSUE SPECIFICITY</scope>
    <scope>GLYCOSYLATION</scope>
</reference>
<reference key="7">
    <citation type="journal article" date="2001" name="J. Biol. Chem.">
        <title>The water channel aquaporin-8 is mainly intracellular in rat hepatocytes, and its plasma membrane insertion is stimulated by cyclic AMP.</title>
        <authorList>
            <person name="Garcia F."/>
            <person name="Kierbel A."/>
            <person name="Larocca M.C."/>
            <person name="Gradilone S.A."/>
            <person name="Splinter P."/>
            <person name="LaRusso N.F."/>
            <person name="Marinelli R.A."/>
        </authorList>
    </citation>
    <scope>SUBCELLULAR LOCATION</scope>
    <scope>GLYCOSYLATION</scope>
</reference>
<reference key="8">
    <citation type="journal article" date="2003" name="Hepatology">
        <title>Glucagon induces the plasma membrane insertion of functional aquaporin-8 water channels in isolated rat hepatocytes.</title>
        <authorList>
            <person name="Gradilone S.A."/>
            <person name="Garcia F."/>
            <person name="Huebert R.C."/>
            <person name="Tietz P.S."/>
            <person name="Larocca M.C."/>
            <person name="Kierbel A."/>
            <person name="Carreras F.I."/>
            <person name="Larusso N.F."/>
            <person name="Marinelli R.A."/>
        </authorList>
    </citation>
    <scope>FUNCTION</scope>
    <scope>TRANSPORTER ACTIVITY</scope>
    <scope>SUBCELLULAR LOCATION</scope>
</reference>
<reference key="9">
    <citation type="journal article" date="2005" name="J. Biol. Chem.">
        <title>The inner mitochondrial membrane has aquaporin-8 water channels and is highly permeable to water.</title>
        <authorList>
            <person name="Calamita G."/>
            <person name="Ferri D."/>
            <person name="Gena P."/>
            <person name="Liquori G.E."/>
            <person name="Cavalier A."/>
            <person name="Thomas D."/>
            <person name="Svelto M."/>
        </authorList>
    </citation>
    <scope>FUNCTION</scope>
    <scope>TRANSPORTER ACTIVITY</scope>
    <scope>SUBCELLULAR LOCATION</scope>
</reference>
<reference key="10">
    <citation type="journal article" date="2005" name="J. Nutr.">
        <title>Aquaporin-8 is involved in water transport in isolated superficial colonocytes from rat proximal colon.</title>
        <authorList>
            <person name="Laforenza U."/>
            <person name="Cova E."/>
            <person name="Gastaldi G."/>
            <person name="Tritto S."/>
            <person name="Grazioli M."/>
            <person name="LaRusso N.F."/>
            <person name="Splinter P.L."/>
            <person name="D'Adamo P."/>
            <person name="Tosco M."/>
            <person name="Ventura U."/>
        </authorList>
    </citation>
    <scope>FUNCTION</scope>
    <scope>TRANSPORTER ACTIVITY</scope>
    <scope>SUBCELLULAR LOCATION</scope>
</reference>
<reference key="11">
    <citation type="journal article" date="2005" name="Pflugers Arch.">
        <title>NH3 and NH4+ permeability in aquaporin-expressing Xenopus oocytes.</title>
        <authorList>
            <person name="Holm L.M."/>
            <person name="Jahn T.P."/>
            <person name="Moeller A.L."/>
            <person name="Schjoerring J.K."/>
            <person name="Ferri D."/>
            <person name="Klaerke D.A."/>
            <person name="Zeuthen T."/>
        </authorList>
    </citation>
    <scope>FUNCTION</scope>
    <scope>TRANSPORTER ACTIVITY</scope>
</reference>
<reference key="12">
    <citation type="journal article" date="2006" name="Am. J. Physiol.">
        <title>Evidence from knockout mice against physiologically significant aquaporin 8-facilitated ammonia transport.</title>
        <authorList>
            <person name="Yang B."/>
            <person name="Zhao D."/>
            <person name="Solenov E."/>
            <person name="Verkman A.S."/>
        </authorList>
    </citation>
    <scope>FUNCTION</scope>
    <scope>TRANSPORTER ACTIVITY</scope>
</reference>
<reference key="13">
    <citation type="journal article" date="2006" name="Biol. Cell">
        <title>Purification and functional characterization of aquaporin-8.</title>
        <authorList>
            <person name="Liu K."/>
            <person name="Nagase H."/>
            <person name="Huang C.G."/>
            <person name="Calamita G."/>
            <person name="Agre P."/>
        </authorList>
    </citation>
    <scope>FUNCTION</scope>
    <scope>TRANSPORTER ACTIVITY</scope>
</reference>
<reference key="14">
    <citation type="journal article" date="2006" name="Pflugers Arch.">
        <title>Further evidence for AQP8 expression in the myoepithelium of rat submandibular and parotid glands.</title>
        <authorList>
            <person name="Wellner R.B."/>
            <person name="Redman R.S."/>
            <person name="Swaim W.D."/>
            <person name="Baum B.J."/>
        </authorList>
    </citation>
    <scope>TISSUE SPECIFICITY</scope>
</reference>
<reference key="15">
    <citation type="journal article" date="2007" name="Biochem. Cell Biol.">
        <title>Osmotic water permeability of rat intestinal brush border membrane vesicles: involvement of aquaporin-7 and aquaporin-8 and effect of metal ions.</title>
        <authorList>
            <person name="Tritto S."/>
            <person name="Gastaldi G."/>
            <person name="Zelenin S."/>
            <person name="Grazioli M."/>
            <person name="Orsenigo M.N."/>
            <person name="Ventura U."/>
            <person name="Laforenza U."/>
            <person name="Zelenina M."/>
        </authorList>
    </citation>
    <scope>FUNCTION</scope>
    <scope>TRANSPORTER ACTIVITY</scope>
    <scope>TISSUE SPECIFICITY</scope>
    <scope>SUBCELLULAR LOCATION</scope>
</reference>
<reference key="16">
    <citation type="journal article" date="2007" name="J. Biol. Chem.">
        <title>Fast and selective ammonia transport by aquaporin-8.</title>
        <authorList>
            <person name="Saparov S.M."/>
            <person name="Liu K."/>
            <person name="Agre P."/>
            <person name="Pohl P."/>
        </authorList>
    </citation>
    <scope>FUNCTION</scope>
    <scope>TRANSPORTER ACTIVITY</scope>
</reference>
<reference key="17">
    <citation type="journal article" date="2010" name="Biochem. Biophys. Res. Commun.">
        <title>Aquaporin-8-facilitated mitochondrial ammonia transport.</title>
        <authorList>
            <person name="Soria L.R."/>
            <person name="Fanelli E."/>
            <person name="Altamura N."/>
            <person name="Svelto M."/>
            <person name="Marinelli R.A."/>
            <person name="Calamita G."/>
        </authorList>
    </citation>
    <scope>FUNCTION</scope>
    <scope>TRANSPORTER ACTIVITY</scope>
</reference>
<reference key="18">
    <citation type="journal article" date="2012" name="Am. J. Physiol.">
        <title>Mitochondrial aquaporin-8 in renal proximal tubule cells: evidence for a role in the response to metabolic acidosis.</title>
        <authorList>
            <person name="Molinas S.M."/>
            <person name="Trumper L."/>
            <person name="Marinelli R.A."/>
        </authorList>
    </citation>
    <scope>SUBCELLULAR LOCATION</scope>
</reference>
<reference key="19">
    <citation type="journal article" date="2013" name="Hepatology">
        <title>Ammonia detoxification via ureagenesis in rat hepatocytes involves mitochondrial aquaporin-8 channels.</title>
        <authorList>
            <person name="Soria L.R."/>
            <person name="Marrone J."/>
            <person name="Calamita G."/>
            <person name="Marinelli R.A."/>
        </authorList>
    </citation>
    <scope>FUNCTION</scope>
    <scope>TRANSPORTER ACTIVITY</scope>
    <scope>SUBCELLULAR LOCATION</scope>
    <scope>INDUCTION</scope>
</reference>
<reference key="20">
    <citation type="journal article" date="2019" name="Data Brief">
        <title>Data of H2O2 release from AQP8-knockdown rat hepatocyte mitochondria.</title>
        <authorList>
            <person name="Danielli M."/>
            <person name="Marrone J."/>
            <person name="Capiglioni A.M."/>
            <person name="Marinelli R.A."/>
        </authorList>
    </citation>
    <scope>FUNCTION</scope>
    <scope>TRANSPORTER ACTIVITY</scope>
</reference>
<reference key="21">
    <citation type="journal article" date="2021" name="Redox Biol.">
        <title>AQP8 is a crucial H2O2 transporter in insulin-producing RINm5F cells.</title>
        <authorList>
            <person name="Krueger C."/>
            <person name="Waldeck-Weiermair M."/>
            <person name="Kaynert J."/>
            <person name="Pokrant T."/>
            <person name="Komaragiri Y."/>
            <person name="Otto O."/>
            <person name="Michel T."/>
            <person name="Elsner M."/>
        </authorList>
    </citation>
    <scope>FUNCTION</scope>
    <scope>TRANSPORTER ACTIVITY</scope>
    <scope>TISSUE SPECIFICITY</scope>
    <scope>SUBCELLULAR LOCATION</scope>
</reference>
<accession>P56405</accession>
<proteinExistence type="evidence at protein level"/>
<evidence type="ECO:0000250" key="1">
    <source>
        <dbReference type="UniProtKB" id="O94778"/>
    </source>
</evidence>
<evidence type="ECO:0000250" key="2">
    <source>
        <dbReference type="UniProtKB" id="P56404"/>
    </source>
</evidence>
<evidence type="ECO:0000255" key="3"/>
<evidence type="ECO:0000269" key="4">
    <source>
    </source>
</evidence>
<evidence type="ECO:0000269" key="5">
    <source>
    </source>
</evidence>
<evidence type="ECO:0000269" key="6">
    <source>
    </source>
</evidence>
<evidence type="ECO:0000269" key="7">
    <source>
    </source>
</evidence>
<evidence type="ECO:0000269" key="8">
    <source>
    </source>
</evidence>
<evidence type="ECO:0000269" key="9">
    <source>
    </source>
</evidence>
<evidence type="ECO:0000269" key="10">
    <source>
    </source>
</evidence>
<evidence type="ECO:0000269" key="11">
    <source>
    </source>
</evidence>
<evidence type="ECO:0000269" key="12">
    <source>
    </source>
</evidence>
<evidence type="ECO:0000269" key="13">
    <source>
    </source>
</evidence>
<evidence type="ECO:0000269" key="14">
    <source>
    </source>
</evidence>
<evidence type="ECO:0000269" key="15">
    <source>
    </source>
</evidence>
<evidence type="ECO:0000269" key="16">
    <source>
    </source>
</evidence>
<evidence type="ECO:0000269" key="17">
    <source>
    </source>
</evidence>
<evidence type="ECO:0000269" key="18">
    <source>
    </source>
</evidence>
<evidence type="ECO:0000269" key="19">
    <source>
    </source>
</evidence>
<evidence type="ECO:0000269" key="20">
    <source>
    </source>
</evidence>
<evidence type="ECO:0000269" key="21">
    <source>
    </source>
</evidence>
<evidence type="ECO:0000269" key="22">
    <source>
    </source>
</evidence>
<evidence type="ECO:0000303" key="23">
    <source>
    </source>
</evidence>
<evidence type="ECO:0000303" key="24">
    <source>
    </source>
</evidence>
<evidence type="ECO:0000305" key="25"/>
<evidence type="ECO:0000305" key="26">
    <source>
    </source>
</evidence>
<evidence type="ECO:0000312" key="27">
    <source>
        <dbReference type="RGD" id="2146"/>
    </source>
</evidence>
<protein>
    <recommendedName>
        <fullName evidence="23">Aquaporin-8</fullName>
        <shortName>AQP-8</shortName>
    </recommendedName>
</protein>
<feature type="chain" id="PRO_0000063963" description="Aquaporin-8">
    <location>
        <begin position="1"/>
        <end position="263"/>
    </location>
</feature>
<feature type="topological domain" description="Cytoplasmic" evidence="3">
    <location>
        <begin position="1"/>
        <end position="38"/>
    </location>
</feature>
<feature type="transmembrane region" description="Helical" evidence="3">
    <location>
        <begin position="39"/>
        <end position="59"/>
    </location>
</feature>
<feature type="topological domain" description="Extracellular" evidence="3">
    <location>
        <begin position="60"/>
        <end position="86"/>
    </location>
</feature>
<feature type="transmembrane region" description="Helical" evidence="3">
    <location>
        <begin position="87"/>
        <end position="107"/>
    </location>
</feature>
<feature type="topological domain" description="Cytoplasmic" evidence="3">
    <location>
        <begin position="108"/>
        <end position="109"/>
    </location>
</feature>
<feature type="transmembrane region" description="Helical" evidence="3">
    <location>
        <begin position="110"/>
        <end position="130"/>
    </location>
</feature>
<feature type="topological domain" description="Extracellular" evidence="3">
    <location>
        <begin position="131"/>
        <end position="158"/>
    </location>
</feature>
<feature type="transmembrane region" description="Helical" evidence="3">
    <location>
        <begin position="159"/>
        <end position="179"/>
    </location>
</feature>
<feature type="topological domain" description="Cytoplasmic" evidence="3">
    <location>
        <begin position="180"/>
        <end position="185"/>
    </location>
</feature>
<feature type="transmembrane region" description="Helical" evidence="3">
    <location>
        <begin position="186"/>
        <end position="206"/>
    </location>
</feature>
<feature type="topological domain" description="Extracellular" evidence="3">
    <location>
        <begin position="207"/>
        <end position="230"/>
    </location>
</feature>
<feature type="transmembrane region" description="Helical" evidence="3">
    <location>
        <begin position="231"/>
        <end position="251"/>
    </location>
</feature>
<feature type="topological domain" description="Cytoplasmic" evidence="3">
    <location>
        <begin position="252"/>
        <end position="263"/>
    </location>
</feature>
<feature type="short sequence motif" description="NPA 1">
    <location>
        <begin position="94"/>
        <end position="96"/>
    </location>
</feature>
<feature type="short sequence motif" description="NPA 2">
    <location>
        <begin position="212"/>
        <end position="214"/>
    </location>
</feature>
<feature type="modified residue" description="Cysteine persulfide" evidence="1">
    <location>
        <position position="55"/>
    </location>
</feature>
<feature type="modified residue" description="Cysteine sulfenic acid (-SOH)" evidence="1">
    <location>
        <position position="55"/>
    </location>
</feature>
<feature type="glycosylation site" description="N-linked (GlcNAc...) asparagine" evidence="3">
    <location>
        <position position="141"/>
    </location>
</feature>
<gene>
    <name evidence="24 27" type="primary">Aqp8</name>
</gene>
<sequence>MSGEQTPMCSMDLREIKGKETNMADSYHGMSWYEQYIQPCVVELLGSALFIFIGCLSVIENSPNTGLLQPALAHGLALGLIIATLGNISGGHFNPAVSLAVTLVGGLKTMLLIPYWVSQLFGGMIGAALAKVVSPEERFWNASGAAFAIVQEQEQVAEALGVEIVMTMLLVLAVCMGAVNEKTMGPLAPFSIGFSVIVDILAGGGISGACMNPARAFGPAVMAGYWDFHWIYWLGPLLAGLFVGLLIRLFIGDEKTRLILKSR</sequence>